<accession>W7JPD9</accession>
<gene>
    <name evidence="9" type="primary">PMV</name>
    <name evidence="13" type="ORF">CK202_2868</name>
    <name evidence="12" type="ORF">PFNF54_04321</name>
</gene>
<feature type="signal peptide" evidence="10">
    <location>
        <begin position="1"/>
        <end status="unknown"/>
    </location>
</feature>
<feature type="chain" id="PRO_0000453928" description="Plasmepsin V">
    <location>
        <begin status="unknown"/>
        <end position="590"/>
    </location>
</feature>
<feature type="topological domain" description="Lumenal" evidence="2">
    <location>
        <begin position="1"/>
        <end position="544"/>
    </location>
</feature>
<feature type="transmembrane region" description="Helical" evidence="3">
    <location>
        <begin position="545"/>
        <end position="565"/>
    </location>
</feature>
<feature type="topological domain" description="Cytoplasmic" evidence="2">
    <location>
        <begin position="566"/>
        <end position="590"/>
    </location>
</feature>
<feature type="domain" description="Peptidase A1" evidence="4">
    <location>
        <begin position="100"/>
        <end position="514"/>
    </location>
</feature>
<feature type="region of interest" description="Disordered" evidence="6">
    <location>
        <begin position="282"/>
        <end position="316"/>
    </location>
</feature>
<feature type="coiled-coil region" evidence="3">
    <location>
        <begin position="33"/>
        <end position="81"/>
    </location>
</feature>
<feature type="compositionally biased region" description="Basic and acidic residues" evidence="6">
    <location>
        <begin position="282"/>
        <end position="291"/>
    </location>
</feature>
<feature type="compositionally biased region" description="Low complexity" evidence="6">
    <location>
        <begin position="292"/>
        <end position="304"/>
    </location>
</feature>
<feature type="active site" evidence="4">
    <location>
        <position position="118"/>
    </location>
</feature>
<feature type="active site" evidence="4">
    <location>
        <position position="365"/>
    </location>
</feature>
<feature type="disulfide bond" evidence="1">
    <location>
        <begin position="128"/>
        <end position="211"/>
    </location>
</feature>
<feature type="disulfide bond" evidence="1">
    <location>
        <begin position="131"/>
        <end position="134"/>
    </location>
</feature>
<feature type="disulfide bond" evidence="1">
    <location>
        <begin position="155"/>
        <end position="166"/>
    </location>
</feature>
<feature type="disulfide bond" evidence="1">
    <location>
        <begin position="160"/>
        <end position="171"/>
    </location>
</feature>
<feature type="disulfide bond" evidence="1">
    <location>
        <begin position="259"/>
        <end position="518"/>
    </location>
</feature>
<feature type="disulfide bond" evidence="1">
    <location>
        <begin position="389"/>
        <end position="434"/>
    </location>
</feature>
<feature type="disulfide bond" evidence="1">
    <location>
        <begin position="443"/>
        <end position="479"/>
    </location>
</feature>
<keyword id="KW-0064">Aspartyl protease</keyword>
<keyword id="KW-0175">Coiled coil</keyword>
<keyword id="KW-1015">Disulfide bond</keyword>
<keyword id="KW-0256">Endoplasmic reticulum</keyword>
<keyword id="KW-0378">Hydrolase</keyword>
<keyword id="KW-0472">Membrane</keyword>
<keyword id="KW-0645">Protease</keyword>
<keyword id="KW-1185">Reference proteome</keyword>
<keyword id="KW-0732">Signal</keyword>
<keyword id="KW-0812">Transmembrane</keyword>
<keyword id="KW-1133">Transmembrane helix</keyword>
<name>PLM5_PLAFO</name>
<dbReference type="EC" id="3.4.23.-" evidence="11"/>
<dbReference type="EMBL" id="KE123862">
    <property type="protein sequence ID" value="EWC86768.1"/>
    <property type="molecule type" value="Genomic_DNA"/>
</dbReference>
<dbReference type="EMBL" id="NYMT01000007">
    <property type="protein sequence ID" value="PKC47229.1"/>
    <property type="molecule type" value="Genomic_DNA"/>
</dbReference>
<dbReference type="SMR" id="W7JPD9"/>
<dbReference type="EnsemblProtists" id="EWC86768">
    <property type="protein sequence ID" value="EWC86768"/>
    <property type="gene ID" value="PFNF54_04321"/>
</dbReference>
<dbReference type="VEuPathDB" id="PlasmoDB:PfNF54_130028900"/>
<dbReference type="OMA" id="CGVHMEN"/>
<dbReference type="Proteomes" id="UP000030673">
    <property type="component" value="Unassembled WGS sequence"/>
</dbReference>
<dbReference type="Proteomes" id="UP000232684">
    <property type="component" value="Unassembled WGS sequence"/>
</dbReference>
<dbReference type="GO" id="GO:0005789">
    <property type="term" value="C:endoplasmic reticulum membrane"/>
    <property type="evidence" value="ECO:0000315"/>
    <property type="project" value="UniProtKB"/>
</dbReference>
<dbReference type="GO" id="GO:0004190">
    <property type="term" value="F:aspartic-type endopeptidase activity"/>
    <property type="evidence" value="ECO:0007669"/>
    <property type="project" value="UniProtKB-KW"/>
</dbReference>
<dbReference type="GO" id="GO:0032527">
    <property type="term" value="P:protein exit from endoplasmic reticulum"/>
    <property type="evidence" value="ECO:0000315"/>
    <property type="project" value="UniProtKB"/>
</dbReference>
<dbReference type="GO" id="GO:0016485">
    <property type="term" value="P:protein processing"/>
    <property type="evidence" value="ECO:0000315"/>
    <property type="project" value="UniProtKB"/>
</dbReference>
<dbReference type="CDD" id="cd06096">
    <property type="entry name" value="Plasmepsin_5"/>
    <property type="match status" value="1"/>
</dbReference>
<dbReference type="FunFam" id="2.40.70.10:FF:000080">
    <property type="entry name" value="Plasmepsin V"/>
    <property type="match status" value="1"/>
</dbReference>
<dbReference type="Gene3D" id="2.40.70.10">
    <property type="entry name" value="Acid Proteases"/>
    <property type="match status" value="2"/>
</dbReference>
<dbReference type="InterPro" id="IPR001461">
    <property type="entry name" value="Aspartic_peptidase_A1"/>
</dbReference>
<dbReference type="InterPro" id="IPR001969">
    <property type="entry name" value="Aspartic_peptidase_AS"/>
</dbReference>
<dbReference type="InterPro" id="IPR033121">
    <property type="entry name" value="PEPTIDASE_A1"/>
</dbReference>
<dbReference type="InterPro" id="IPR021109">
    <property type="entry name" value="Peptidase_aspartic_dom_sf"/>
</dbReference>
<dbReference type="InterPro" id="IPR033866">
    <property type="entry name" value="Plasmepsin_5"/>
</dbReference>
<dbReference type="InterPro" id="IPR032861">
    <property type="entry name" value="TAXi_N"/>
</dbReference>
<dbReference type="PANTHER" id="PTHR13683">
    <property type="entry name" value="ASPARTYL PROTEASES"/>
    <property type="match status" value="1"/>
</dbReference>
<dbReference type="PANTHER" id="PTHR13683:SF375">
    <property type="entry name" value="PEPTIDASE A1 DOMAIN-CONTAINING PROTEIN"/>
    <property type="match status" value="1"/>
</dbReference>
<dbReference type="Pfam" id="PF00026">
    <property type="entry name" value="Asp"/>
    <property type="match status" value="1"/>
</dbReference>
<dbReference type="Pfam" id="PF14543">
    <property type="entry name" value="TAXi_N"/>
    <property type="match status" value="1"/>
</dbReference>
<dbReference type="PRINTS" id="PR00792">
    <property type="entry name" value="PEPSIN"/>
</dbReference>
<dbReference type="SUPFAM" id="SSF50630">
    <property type="entry name" value="Acid proteases"/>
    <property type="match status" value="1"/>
</dbReference>
<dbReference type="PROSITE" id="PS00141">
    <property type="entry name" value="ASP_PROTEASE"/>
    <property type="match status" value="2"/>
</dbReference>
<dbReference type="PROSITE" id="PS51767">
    <property type="entry name" value="PEPTIDASE_A1"/>
    <property type="match status" value="1"/>
</dbReference>
<reference evidence="14" key="1">
    <citation type="submission" date="2013-02" db="EMBL/GenBank/DDBJ databases">
        <title>The Genome Sequence of Plasmodium falciparum NF54.</title>
        <authorList>
            <consortium name="The Broad Institute Genome Sequencing Platform"/>
            <consortium name="The Broad Institute Genome Sequencing Center for Infectious Disease"/>
            <person name="Neafsey D."/>
            <person name="Cheeseman I."/>
            <person name="Volkman S."/>
            <person name="Adams J."/>
            <person name="Walker B."/>
            <person name="Young S.K."/>
            <person name="Zeng Q."/>
            <person name="Gargeya S."/>
            <person name="Fitzgerald M."/>
            <person name="Haas B."/>
            <person name="Abouelleil A."/>
            <person name="Alvarado L."/>
            <person name="Arachchi H.M."/>
            <person name="Berlin A.M."/>
            <person name="Chapman S.B."/>
            <person name="Dewar J."/>
            <person name="Goldberg J."/>
            <person name="Griggs A."/>
            <person name="Gujja S."/>
            <person name="Hansen M."/>
            <person name="Howarth C."/>
            <person name="Imamovic A."/>
            <person name="Larimer J."/>
            <person name="McCowan C."/>
            <person name="Murphy C."/>
            <person name="Neiman D."/>
            <person name="Pearson M."/>
            <person name="Priest M."/>
            <person name="Roberts A."/>
            <person name="Saif S."/>
            <person name="Shea T."/>
            <person name="Sisk P."/>
            <person name="Sykes S."/>
            <person name="Wortman J."/>
            <person name="Nusbaum C."/>
            <person name="Birren B."/>
        </authorList>
    </citation>
    <scope>NUCLEOTIDE SEQUENCE [LARGE SCALE GENOMIC DNA]</scope>
    <source>
        <strain evidence="14">NF54</strain>
    </source>
</reference>
<reference evidence="15" key="2">
    <citation type="submission" date="2017-11" db="EMBL/GenBank/DDBJ databases">
        <title>Plasmodium falciparum NF54 genome assembly.</title>
        <authorList>
            <person name="Bryant J.M."/>
            <person name="Baumgarten S."/>
            <person name="Scheidig-Benatar C."/>
            <person name="Scherf A."/>
        </authorList>
    </citation>
    <scope>NUCLEOTIDE SEQUENCE [LARGE SCALE GENOMIC DNA]</scope>
    <source>
        <strain evidence="15">NF54</strain>
    </source>
</reference>
<reference evidence="10" key="3">
    <citation type="journal article" date="2019" name="Cell Rep.">
        <title>Inhibition of Plasmepsin V Activity Blocks Plasmodium falciparum Gametocytogenesis and Transmission to Mosquitoes.</title>
        <authorList>
            <person name="Jennison C."/>
            <person name="Lucantoni L."/>
            <person name="O'Neill M.T."/>
            <person name="McConville R."/>
            <person name="Erickson S.M."/>
            <person name="Cowman A.F."/>
            <person name="Sleebs B.E."/>
            <person name="Avery V.M."/>
            <person name="Boddey J.A."/>
        </authorList>
    </citation>
    <scope>FUNCTION</scope>
    <scope>CATALYTIC ACTIVITY</scope>
    <scope>SUBCELLULAR LOCATION</scope>
    <scope>DEVELOPMENTAL STAGE</scope>
</reference>
<reference evidence="10" key="4">
    <citation type="journal article" date="2020" name="ACS Infect. Dis.">
        <title>Assessment of Biological Role and Insight into Druggability of the Plasmodium falciparum Protease Plasmepsin V.</title>
        <authorList>
            <person name="Polino A.J."/>
            <person name="Nasamu A.S."/>
            <person name="Niles J.C."/>
            <person name="Goldberg D.E."/>
        </authorList>
    </citation>
    <scope>FUNCTION</scope>
    <scope>DISRUPTION PHENOTYPE</scope>
</reference>
<comment type="function">
    <text evidence="2 7 8">During the asexual blood stage, plays an essential role in the export of several proteins into the host erythrocytes by cleaving the pentameric localization motif RxLxE/Q/D (termed Plasmodium export element (PEXEL)) located downstream of the N-terminal secretory signal sequence (PubMed:32069391). Specifically, cleaves after the leucine residue in the RxLxE/Q/D (or RxLxxE) motif of exported proteins including RESA, EMP2, EMP3, KAHRP, RIF/Rifin and STEVOR (By similarity). Also, by regulating protein export, plays an essential role in gametocyte development and thus parasite transmission to the mosquito vector (PubMed:31851913).</text>
</comment>
<comment type="subunit">
    <text evidence="2">Component of a complex composed of SPC25 and PMV; the interaction is mediated via the transmembrane domains. The complex interacts with the SEC61 channel-forming translocon complex and is involved in the recognition and import of PEXEL motif-containing proteins into the ER for subsequent export.</text>
</comment>
<comment type="subcellular location">
    <subcellularLocation>
        <location evidence="7">Endoplasmic reticulum membrane</location>
        <topology evidence="2">Single-pass type I membrane protein</topology>
    </subcellularLocation>
    <text evidence="7">During gametogenesis, localizes to the perinuclear ER in stage I-II gametocytes, and relocalizes towards the cell periphery as the ER redistributes in the cell in stage III-IV gametocytes.</text>
</comment>
<comment type="developmental stage">
    <text evidence="7">Expressed during the asexual blood stage including during the ring stage and then in trophozoites (at protein level) (PubMed:31851913). Expressed in all 5 gametocyte stages (PubMed:31851913).</text>
</comment>
<comment type="domain">
    <text evidence="2">The transmembrane domain is essential for localization to the endoplasmic reticulum.</text>
</comment>
<comment type="PTM">
    <text evidence="2">It is not clear if the zymogen has a cleavable propeptide (By similarity). In vitro, appears to be cleaved between Asn-80 and Ala-81 (By similarity). Cleavage of the putative propeptide is dispensable for catalytic activity (By similarity).</text>
</comment>
<comment type="disruption phenotype">
    <text evidence="8">During the asexual blood stage, causes a developmental arrest between the ring and trophozoite stages and impairs export of ring-infected erythrocyte surface antigen RESA.</text>
</comment>
<comment type="similarity">
    <text evidence="5">Belongs to the peptidase A1 family.</text>
</comment>
<comment type="caution">
    <text evidence="10">It is unclear if PMV is glycosylated as other members of the same enzyme family, ie. PMI and PMII, are not.</text>
</comment>
<sequence length="590" mass="68480">MNNYFLRKENFFILFCFVFVSIFFVSNVTIIKCNNVENKIDNVGKKIENVGKKIGDMENKNDNVENKNDNVGNKNDNVKNASSDLYKYKLYGDIDEYAYYFLDIDIGKPSQRISLILDTGSSSLSFPCNGCKDCGIHMEKPYNLNYSKTSSILYCNKSNCPYGLKCVGNKCEYLQSYCEGSQIYGFYFSDIVTLPSYNNKNKISFEKLMGCHMHEESLFLHQQATGVLGFSLTKPNGVPTFVDLLFKHTPSLKPIYSICVSEHGGELIIGGYEPDYFLSNQKEKQKMDKSDNNSSNKGNVSIKLKNNDKNDDEENNSKDVIVSNNVEDIVWQAITRKYYYYIKIYGLDLYGTNIMDKKELDMLVDSGSTFTHIPENIYNQINYYLDILCIHDMTNIYEINKRLKLTNESLNKPLVYFEDFKTALKNIIQNENLCIKIVDGVQCWKSLENLPNLYITLSNNYKMIWKPSSYLYKKESFWCKGLEKQVNNKPILGLTFFKNKQVIFDLQQNQIAFIESKCPSNLTSSRPRTFNEYREKENIFLKVSYINLYCLWLLLALTILLSLILYVRKMFYMDYFPLSDQNKSPIQEST</sequence>
<proteinExistence type="evidence at protein level"/>
<protein>
    <recommendedName>
        <fullName evidence="9">Plasmepsin V</fullName>
        <ecNumber evidence="11">3.4.23.-</ecNumber>
    </recommendedName>
    <alternativeName>
        <fullName evidence="10">Plasmepsin 5</fullName>
    </alternativeName>
</protein>
<evidence type="ECO:0000250" key="1">
    <source>
        <dbReference type="UniProtKB" id="A5K302"/>
    </source>
</evidence>
<evidence type="ECO:0000250" key="2">
    <source>
        <dbReference type="UniProtKB" id="Q8I6Z5"/>
    </source>
</evidence>
<evidence type="ECO:0000255" key="3"/>
<evidence type="ECO:0000255" key="4">
    <source>
        <dbReference type="PROSITE-ProRule" id="PRU01103"/>
    </source>
</evidence>
<evidence type="ECO:0000255" key="5">
    <source>
        <dbReference type="RuleBase" id="RU000454"/>
    </source>
</evidence>
<evidence type="ECO:0000256" key="6">
    <source>
        <dbReference type="SAM" id="MobiDB-lite"/>
    </source>
</evidence>
<evidence type="ECO:0000269" key="7">
    <source>
    </source>
</evidence>
<evidence type="ECO:0000269" key="8">
    <source>
    </source>
</evidence>
<evidence type="ECO:0000303" key="9">
    <source>
    </source>
</evidence>
<evidence type="ECO:0000305" key="10"/>
<evidence type="ECO:0000305" key="11">
    <source>
    </source>
</evidence>
<evidence type="ECO:0000312" key="12">
    <source>
        <dbReference type="EMBL" id="EWC86768.1"/>
    </source>
</evidence>
<evidence type="ECO:0000312" key="13">
    <source>
        <dbReference type="EMBL" id="PKC47229.1"/>
    </source>
</evidence>
<evidence type="ECO:0000312" key="14">
    <source>
        <dbReference type="Proteomes" id="UP000030673"/>
    </source>
</evidence>
<evidence type="ECO:0000312" key="15">
    <source>
        <dbReference type="Proteomes" id="UP000232684"/>
    </source>
</evidence>
<organism evidence="14">
    <name type="scientific">Plasmodium falciparum (isolate NF54)</name>
    <dbReference type="NCBI Taxonomy" id="5843"/>
    <lineage>
        <taxon>Eukaryota</taxon>
        <taxon>Sar</taxon>
        <taxon>Alveolata</taxon>
        <taxon>Apicomplexa</taxon>
        <taxon>Aconoidasida</taxon>
        <taxon>Haemosporida</taxon>
        <taxon>Plasmodiidae</taxon>
        <taxon>Plasmodium</taxon>
        <taxon>Plasmodium (Laverania)</taxon>
    </lineage>
</organism>